<proteinExistence type="inferred from homology"/>
<geneLocation type="chloroplast"/>
<comment type="function">
    <text evidence="1">Component of the cytochrome b6-f complex, which mediates electron transfer between photosystem II (PSII) and photosystem I (PSI), cyclic electron flow around PSI, and state transitions.</text>
</comment>
<comment type="cofactor">
    <cofactor evidence="1">
        <name>heme b</name>
        <dbReference type="ChEBI" id="CHEBI:60344"/>
    </cofactor>
    <text evidence="1">Binds 2 heme b groups non-covalently with two histidine residues as axial ligands.</text>
</comment>
<comment type="cofactor">
    <cofactor evidence="1">
        <name>heme c</name>
        <dbReference type="ChEBI" id="CHEBI:61717"/>
    </cofactor>
    <text evidence="1">Binds one heme group covalently by a single cysteine link with no axial amino acid ligand. This heme was named heme ci.</text>
</comment>
<comment type="subunit">
    <text evidence="1">The 4 large subunits of the cytochrome b6-f complex are cytochrome b6, subunit IV (17 kDa polypeptide, PetD), cytochrome f and the Rieske protein, while the 4 small subunits are PetG, PetL, PetM and PetN. The complex functions as a dimer.</text>
</comment>
<comment type="subcellular location">
    <subcellularLocation>
        <location evidence="1">Plastid</location>
        <location evidence="1">Chloroplast thylakoid membrane</location>
        <topology evidence="1">Multi-pass membrane protein</topology>
    </subcellularLocation>
</comment>
<comment type="miscellaneous">
    <text evidence="1">Heme 1 (or BH or b566) is high-potential and absorbs at about 566 nm, and heme 2 (or BL or b562) is low-potential and absorbs at about 562 nm.</text>
</comment>
<comment type="similarity">
    <text evidence="1">Belongs to the cytochrome b family. PetB subfamily.</text>
</comment>
<dbReference type="EMBL" id="DQ887677">
    <property type="protein sequence ID" value="ABI14501.1"/>
    <property type="molecule type" value="Genomic_DNA"/>
</dbReference>
<dbReference type="RefSeq" id="YP_784503.1">
    <property type="nucleotide sequence ID" value="NC_008457.1"/>
</dbReference>
<dbReference type="SMR" id="Q06GN0"/>
<dbReference type="GeneID" id="4363648"/>
<dbReference type="GO" id="GO:0009535">
    <property type="term" value="C:chloroplast thylakoid membrane"/>
    <property type="evidence" value="ECO:0007669"/>
    <property type="project" value="UniProtKB-SubCell"/>
</dbReference>
<dbReference type="GO" id="GO:0045158">
    <property type="term" value="F:electron transporter, transferring electrons within cytochrome b6/f complex of photosystem II activity"/>
    <property type="evidence" value="ECO:0007669"/>
    <property type="project" value="UniProtKB-UniRule"/>
</dbReference>
<dbReference type="GO" id="GO:0046872">
    <property type="term" value="F:metal ion binding"/>
    <property type="evidence" value="ECO:0007669"/>
    <property type="project" value="UniProtKB-KW"/>
</dbReference>
<dbReference type="GO" id="GO:0016491">
    <property type="term" value="F:oxidoreductase activity"/>
    <property type="evidence" value="ECO:0007669"/>
    <property type="project" value="InterPro"/>
</dbReference>
<dbReference type="GO" id="GO:0015979">
    <property type="term" value="P:photosynthesis"/>
    <property type="evidence" value="ECO:0007669"/>
    <property type="project" value="UniProtKB-UniRule"/>
</dbReference>
<dbReference type="GO" id="GO:0022904">
    <property type="term" value="P:respiratory electron transport chain"/>
    <property type="evidence" value="ECO:0007669"/>
    <property type="project" value="InterPro"/>
</dbReference>
<dbReference type="CDD" id="cd00284">
    <property type="entry name" value="Cytochrome_b_N"/>
    <property type="match status" value="1"/>
</dbReference>
<dbReference type="FunFam" id="1.20.810.10:FF:000001">
    <property type="entry name" value="Cytochrome b6"/>
    <property type="match status" value="1"/>
</dbReference>
<dbReference type="Gene3D" id="1.20.810.10">
    <property type="entry name" value="Cytochrome Bc1 Complex, Chain C"/>
    <property type="match status" value="1"/>
</dbReference>
<dbReference type="HAMAP" id="MF_00633">
    <property type="entry name" value="Cytb6_f_cytb6"/>
    <property type="match status" value="1"/>
</dbReference>
<dbReference type="InterPro" id="IPR005797">
    <property type="entry name" value="Cyt_b/b6_N"/>
</dbReference>
<dbReference type="InterPro" id="IPR023530">
    <property type="entry name" value="Cyt_B6_PetB"/>
</dbReference>
<dbReference type="InterPro" id="IPR027387">
    <property type="entry name" value="Cytb/b6-like_sf"/>
</dbReference>
<dbReference type="InterPro" id="IPR048259">
    <property type="entry name" value="Cytochrome_b_N_euk/bac"/>
</dbReference>
<dbReference type="InterPro" id="IPR016174">
    <property type="entry name" value="Di-haem_cyt_TM"/>
</dbReference>
<dbReference type="NCBIfam" id="NF002990">
    <property type="entry name" value="PRK03735.1"/>
    <property type="match status" value="1"/>
</dbReference>
<dbReference type="PANTHER" id="PTHR19271">
    <property type="entry name" value="CYTOCHROME B"/>
    <property type="match status" value="1"/>
</dbReference>
<dbReference type="PANTHER" id="PTHR19271:SF16">
    <property type="entry name" value="CYTOCHROME B"/>
    <property type="match status" value="1"/>
</dbReference>
<dbReference type="Pfam" id="PF00033">
    <property type="entry name" value="Cytochrome_B"/>
    <property type="match status" value="1"/>
</dbReference>
<dbReference type="PIRSF" id="PIRSF000032">
    <property type="entry name" value="Cytochrome_b6"/>
    <property type="match status" value="1"/>
</dbReference>
<dbReference type="SUPFAM" id="SSF81342">
    <property type="entry name" value="Transmembrane di-heme cytochromes"/>
    <property type="match status" value="1"/>
</dbReference>
<dbReference type="PROSITE" id="PS51002">
    <property type="entry name" value="CYTB_NTER"/>
    <property type="match status" value="1"/>
</dbReference>
<sequence length="215" mass="24199">MSKVYDWFEERLEIQAIADDITSKYVPPHVNIFYCLGGITLTCFLVQVATGFAMTFYYRPTVTEAFASVQYIMTEANFGWLIRSVHRWSASMMVLMMILHVFRVYLTGGFKKPRELTWVTGVILAVLTASFGVTGYSLPWDQIGYWAVKIVTGVPEAIPVIGSPLVELLRGSTSVGQSTLTRFYSLHTFVLPLLTAVFMLMHFSMIRKQGISGPL</sequence>
<name>CYB6_PIPCE</name>
<evidence type="ECO:0000255" key="1">
    <source>
        <dbReference type="HAMAP-Rule" id="MF_00633"/>
    </source>
</evidence>
<feature type="chain" id="PRO_0000275330" description="Cytochrome b6">
    <location>
        <begin position="1"/>
        <end position="215"/>
    </location>
</feature>
<feature type="transmembrane region" description="Helical" evidence="1">
    <location>
        <begin position="32"/>
        <end position="52"/>
    </location>
</feature>
<feature type="transmembrane region" description="Helical" evidence="1">
    <location>
        <begin position="90"/>
        <end position="110"/>
    </location>
</feature>
<feature type="transmembrane region" description="Helical" evidence="1">
    <location>
        <begin position="116"/>
        <end position="136"/>
    </location>
</feature>
<feature type="transmembrane region" description="Helical" evidence="1">
    <location>
        <begin position="186"/>
        <end position="206"/>
    </location>
</feature>
<feature type="binding site" description="covalent" evidence="1">
    <location>
        <position position="35"/>
    </location>
    <ligand>
        <name>heme c</name>
        <dbReference type="ChEBI" id="CHEBI:61717"/>
    </ligand>
</feature>
<feature type="binding site" description="axial binding residue" evidence="1">
    <location>
        <position position="86"/>
    </location>
    <ligand>
        <name>heme b</name>
        <dbReference type="ChEBI" id="CHEBI:60344"/>
        <label>2</label>
    </ligand>
    <ligandPart>
        <name>Fe</name>
        <dbReference type="ChEBI" id="CHEBI:18248"/>
    </ligandPart>
</feature>
<feature type="binding site" description="axial binding residue" evidence="1">
    <location>
        <position position="100"/>
    </location>
    <ligand>
        <name>heme b</name>
        <dbReference type="ChEBI" id="CHEBI:60344"/>
        <label>1</label>
    </ligand>
    <ligandPart>
        <name>Fe</name>
        <dbReference type="ChEBI" id="CHEBI:18248"/>
    </ligandPart>
</feature>
<feature type="binding site" description="axial binding residue" evidence="1">
    <location>
        <position position="187"/>
    </location>
    <ligand>
        <name>heme b</name>
        <dbReference type="ChEBI" id="CHEBI:60344"/>
        <label>2</label>
    </ligand>
    <ligandPart>
        <name>Fe</name>
        <dbReference type="ChEBI" id="CHEBI:18248"/>
    </ligandPart>
</feature>
<feature type="binding site" description="axial binding residue" evidence="1">
    <location>
        <position position="202"/>
    </location>
    <ligand>
        <name>heme b</name>
        <dbReference type="ChEBI" id="CHEBI:60344"/>
        <label>1</label>
    </ligand>
    <ligandPart>
        <name>Fe</name>
        <dbReference type="ChEBI" id="CHEBI:18248"/>
    </ligandPart>
</feature>
<gene>
    <name evidence="1" type="primary">petB</name>
</gene>
<organism>
    <name type="scientific">Piper cenocladum</name>
    <name type="common">Ant piper</name>
    <dbReference type="NCBI Taxonomy" id="398741"/>
    <lineage>
        <taxon>Eukaryota</taxon>
        <taxon>Viridiplantae</taxon>
        <taxon>Streptophyta</taxon>
        <taxon>Embryophyta</taxon>
        <taxon>Tracheophyta</taxon>
        <taxon>Spermatophyta</taxon>
        <taxon>Magnoliopsida</taxon>
        <taxon>Magnoliidae</taxon>
        <taxon>Piperales</taxon>
        <taxon>Piperaceae</taxon>
        <taxon>Piper</taxon>
    </lineage>
</organism>
<keyword id="KW-0150">Chloroplast</keyword>
<keyword id="KW-0249">Electron transport</keyword>
<keyword id="KW-0349">Heme</keyword>
<keyword id="KW-0408">Iron</keyword>
<keyword id="KW-0472">Membrane</keyword>
<keyword id="KW-0479">Metal-binding</keyword>
<keyword id="KW-0602">Photosynthesis</keyword>
<keyword id="KW-0934">Plastid</keyword>
<keyword id="KW-0793">Thylakoid</keyword>
<keyword id="KW-0812">Transmembrane</keyword>
<keyword id="KW-1133">Transmembrane helix</keyword>
<keyword id="KW-0813">Transport</keyword>
<accession>Q06GN0</accession>
<protein>
    <recommendedName>
        <fullName evidence="1">Cytochrome b6</fullName>
    </recommendedName>
</protein>
<reference key="1">
    <citation type="journal article" date="2006" name="BMC Evol. Biol.">
        <title>Complete plastid genome sequences of Drimys, Liriodendron, and Piper: implications for the phylogenetic relationships of magnoliids.</title>
        <authorList>
            <person name="Cai Z."/>
            <person name="Penaflor C."/>
            <person name="Kuehl J.V."/>
            <person name="Leebens-Mack J."/>
            <person name="Carlson J.E."/>
            <person name="dePamphilis C.W."/>
            <person name="Boore J.L."/>
            <person name="Jansen R.K."/>
        </authorList>
    </citation>
    <scope>NUCLEOTIDE SEQUENCE [LARGE SCALE GENOMIC DNA]</scope>
</reference>